<name>AROC_PROM5</name>
<comment type="function">
    <text evidence="1">Catalyzes the anti-1,4-elimination of the C-3 phosphate and the C-6 proR hydrogen from 5-enolpyruvylshikimate-3-phosphate (EPSP) to yield chorismate, which is the branch point compound that serves as the starting substrate for the three terminal pathways of aromatic amino acid biosynthesis. This reaction introduces a second double bond into the aromatic ring system.</text>
</comment>
<comment type="catalytic activity">
    <reaction evidence="1">
        <text>5-O-(1-carboxyvinyl)-3-phosphoshikimate = chorismate + phosphate</text>
        <dbReference type="Rhea" id="RHEA:21020"/>
        <dbReference type="ChEBI" id="CHEBI:29748"/>
        <dbReference type="ChEBI" id="CHEBI:43474"/>
        <dbReference type="ChEBI" id="CHEBI:57701"/>
        <dbReference type="EC" id="4.2.3.5"/>
    </reaction>
</comment>
<comment type="cofactor">
    <cofactor evidence="1">
        <name>FMNH2</name>
        <dbReference type="ChEBI" id="CHEBI:57618"/>
    </cofactor>
    <text evidence="1">Reduced FMN (FMNH(2)).</text>
</comment>
<comment type="pathway">
    <text evidence="1">Metabolic intermediate biosynthesis; chorismate biosynthesis; chorismate from D-erythrose 4-phosphate and phosphoenolpyruvate: step 7/7.</text>
</comment>
<comment type="subunit">
    <text evidence="1">Homotetramer.</text>
</comment>
<comment type="similarity">
    <text evidence="1">Belongs to the chorismate synthase family.</text>
</comment>
<accession>A2BUK4</accession>
<keyword id="KW-0028">Amino-acid biosynthesis</keyword>
<keyword id="KW-0057">Aromatic amino acid biosynthesis</keyword>
<keyword id="KW-0274">FAD</keyword>
<keyword id="KW-0285">Flavoprotein</keyword>
<keyword id="KW-0288">FMN</keyword>
<keyword id="KW-0456">Lyase</keyword>
<keyword id="KW-0521">NADP</keyword>
<proteinExistence type="inferred from homology"/>
<gene>
    <name evidence="1" type="primary">aroC</name>
    <name type="ordered locus">P9515_02561</name>
</gene>
<sequence>MSSIFGKIFRVSTFGESHGGAVGVILDGCPPKLKINIDLIQNELDRRRPGQSKITTPRKEDDKLEILSGLKEGITLGTPIAMLVRNKDQRPEDYNNLEQVFRPSHADGTYHLKYGIQAGSGGGRASARETIGRVAAGAIAKQLLKTLFNTEILSWVKRIHDIDSQVNKNKLTLSKIDSNIVRCPDEKVATKMIQRIKELQQEGDSCGGVIECLVKNVPSGLGMPVFDKLEADLAKALMSLPATKGFEIGSGFLGTYLRGSEHNDSFVESDDINKLKTKSNNSGGIQGGISNGENIEMKIAFKPTATIGKEQKTVNSDGKEIVMKAKGRHDPCVLPRAVPMVDSMVALVLADHLLLHQAQCSIIK</sequence>
<organism>
    <name type="scientific">Prochlorococcus marinus (strain MIT 9515)</name>
    <dbReference type="NCBI Taxonomy" id="167542"/>
    <lineage>
        <taxon>Bacteria</taxon>
        <taxon>Bacillati</taxon>
        <taxon>Cyanobacteriota</taxon>
        <taxon>Cyanophyceae</taxon>
        <taxon>Synechococcales</taxon>
        <taxon>Prochlorococcaceae</taxon>
        <taxon>Prochlorococcus</taxon>
    </lineage>
</organism>
<protein>
    <recommendedName>
        <fullName evidence="1">Chorismate synthase</fullName>
        <shortName evidence="1">CS</shortName>
        <ecNumber evidence="1">4.2.3.5</ecNumber>
    </recommendedName>
    <alternativeName>
        <fullName evidence="1">5-enolpyruvylshikimate-3-phosphate phospholyase</fullName>
    </alternativeName>
</protein>
<feature type="chain" id="PRO_1000022524" description="Chorismate synthase">
    <location>
        <begin position="1"/>
        <end position="364"/>
    </location>
</feature>
<feature type="binding site" evidence="1">
    <location>
        <position position="47"/>
    </location>
    <ligand>
        <name>NADP(+)</name>
        <dbReference type="ChEBI" id="CHEBI:58349"/>
    </ligand>
</feature>
<feature type="binding site" evidence="1">
    <location>
        <begin position="124"/>
        <end position="126"/>
    </location>
    <ligand>
        <name>FMN</name>
        <dbReference type="ChEBI" id="CHEBI:58210"/>
    </ligand>
</feature>
<feature type="binding site" evidence="1">
    <location>
        <position position="287"/>
    </location>
    <ligand>
        <name>FMN</name>
        <dbReference type="ChEBI" id="CHEBI:58210"/>
    </ligand>
</feature>
<feature type="binding site" evidence="1">
    <location>
        <begin position="302"/>
        <end position="306"/>
    </location>
    <ligand>
        <name>FMN</name>
        <dbReference type="ChEBI" id="CHEBI:58210"/>
    </ligand>
</feature>
<feature type="binding site" evidence="1">
    <location>
        <position position="328"/>
    </location>
    <ligand>
        <name>FMN</name>
        <dbReference type="ChEBI" id="CHEBI:58210"/>
    </ligand>
</feature>
<reference key="1">
    <citation type="journal article" date="2007" name="PLoS Genet.">
        <title>Patterns and implications of gene gain and loss in the evolution of Prochlorococcus.</title>
        <authorList>
            <person name="Kettler G.C."/>
            <person name="Martiny A.C."/>
            <person name="Huang K."/>
            <person name="Zucker J."/>
            <person name="Coleman M.L."/>
            <person name="Rodrigue S."/>
            <person name="Chen F."/>
            <person name="Lapidus A."/>
            <person name="Ferriera S."/>
            <person name="Johnson J."/>
            <person name="Steglich C."/>
            <person name="Church G.M."/>
            <person name="Richardson P."/>
            <person name="Chisholm S.W."/>
        </authorList>
    </citation>
    <scope>NUCLEOTIDE SEQUENCE [LARGE SCALE GENOMIC DNA]</scope>
    <source>
        <strain>MIT 9515</strain>
    </source>
</reference>
<dbReference type="EC" id="4.2.3.5" evidence="1"/>
<dbReference type="EMBL" id="CP000552">
    <property type="protein sequence ID" value="ABM71465.1"/>
    <property type="molecule type" value="Genomic_DNA"/>
</dbReference>
<dbReference type="RefSeq" id="WP_011819577.1">
    <property type="nucleotide sequence ID" value="NC_008817.1"/>
</dbReference>
<dbReference type="SMR" id="A2BUK4"/>
<dbReference type="STRING" id="167542.P9515_02561"/>
<dbReference type="GeneID" id="60201243"/>
<dbReference type="KEGG" id="pmc:P9515_02561"/>
<dbReference type="eggNOG" id="COG0082">
    <property type="taxonomic scope" value="Bacteria"/>
</dbReference>
<dbReference type="HOGENOM" id="CLU_034547_0_1_3"/>
<dbReference type="OrthoDB" id="9771806at2"/>
<dbReference type="UniPathway" id="UPA00053">
    <property type="reaction ID" value="UER00090"/>
</dbReference>
<dbReference type="Proteomes" id="UP000001589">
    <property type="component" value="Chromosome"/>
</dbReference>
<dbReference type="GO" id="GO:0005829">
    <property type="term" value="C:cytosol"/>
    <property type="evidence" value="ECO:0007669"/>
    <property type="project" value="TreeGrafter"/>
</dbReference>
<dbReference type="GO" id="GO:0004107">
    <property type="term" value="F:chorismate synthase activity"/>
    <property type="evidence" value="ECO:0007669"/>
    <property type="project" value="UniProtKB-UniRule"/>
</dbReference>
<dbReference type="GO" id="GO:0010181">
    <property type="term" value="F:FMN binding"/>
    <property type="evidence" value="ECO:0007669"/>
    <property type="project" value="TreeGrafter"/>
</dbReference>
<dbReference type="GO" id="GO:0008652">
    <property type="term" value="P:amino acid biosynthetic process"/>
    <property type="evidence" value="ECO:0007669"/>
    <property type="project" value="UniProtKB-KW"/>
</dbReference>
<dbReference type="GO" id="GO:0009073">
    <property type="term" value="P:aromatic amino acid family biosynthetic process"/>
    <property type="evidence" value="ECO:0007669"/>
    <property type="project" value="UniProtKB-KW"/>
</dbReference>
<dbReference type="GO" id="GO:0009423">
    <property type="term" value="P:chorismate biosynthetic process"/>
    <property type="evidence" value="ECO:0007669"/>
    <property type="project" value="UniProtKB-UniRule"/>
</dbReference>
<dbReference type="CDD" id="cd07304">
    <property type="entry name" value="Chorismate_synthase"/>
    <property type="match status" value="1"/>
</dbReference>
<dbReference type="FunFam" id="3.60.150.10:FF:000003">
    <property type="entry name" value="Chorismate synthase"/>
    <property type="match status" value="1"/>
</dbReference>
<dbReference type="Gene3D" id="3.60.150.10">
    <property type="entry name" value="Chorismate synthase AroC"/>
    <property type="match status" value="1"/>
</dbReference>
<dbReference type="HAMAP" id="MF_00300">
    <property type="entry name" value="Chorismate_synth"/>
    <property type="match status" value="1"/>
</dbReference>
<dbReference type="InterPro" id="IPR000453">
    <property type="entry name" value="Chorismate_synth"/>
</dbReference>
<dbReference type="InterPro" id="IPR035904">
    <property type="entry name" value="Chorismate_synth_AroC_sf"/>
</dbReference>
<dbReference type="InterPro" id="IPR020541">
    <property type="entry name" value="Chorismate_synthase_CS"/>
</dbReference>
<dbReference type="NCBIfam" id="TIGR00033">
    <property type="entry name" value="aroC"/>
    <property type="match status" value="1"/>
</dbReference>
<dbReference type="NCBIfam" id="NF003793">
    <property type="entry name" value="PRK05382.1"/>
    <property type="match status" value="1"/>
</dbReference>
<dbReference type="PANTHER" id="PTHR21085">
    <property type="entry name" value="CHORISMATE SYNTHASE"/>
    <property type="match status" value="1"/>
</dbReference>
<dbReference type="PANTHER" id="PTHR21085:SF0">
    <property type="entry name" value="CHORISMATE SYNTHASE"/>
    <property type="match status" value="1"/>
</dbReference>
<dbReference type="Pfam" id="PF01264">
    <property type="entry name" value="Chorismate_synt"/>
    <property type="match status" value="1"/>
</dbReference>
<dbReference type="PIRSF" id="PIRSF001456">
    <property type="entry name" value="Chorismate_synth"/>
    <property type="match status" value="1"/>
</dbReference>
<dbReference type="SUPFAM" id="SSF103263">
    <property type="entry name" value="Chorismate synthase, AroC"/>
    <property type="match status" value="1"/>
</dbReference>
<dbReference type="PROSITE" id="PS00787">
    <property type="entry name" value="CHORISMATE_SYNTHASE_1"/>
    <property type="match status" value="1"/>
</dbReference>
<dbReference type="PROSITE" id="PS00788">
    <property type="entry name" value="CHORISMATE_SYNTHASE_2"/>
    <property type="match status" value="1"/>
</dbReference>
<evidence type="ECO:0000255" key="1">
    <source>
        <dbReference type="HAMAP-Rule" id="MF_00300"/>
    </source>
</evidence>